<feature type="chain" id="PRO_1000056243" description="Demethylmenaquinone methyltransferase">
    <location>
        <begin position="1"/>
        <end position="230"/>
    </location>
</feature>
<feature type="binding site" evidence="1">
    <location>
        <position position="62"/>
    </location>
    <ligand>
        <name>S-adenosyl-L-methionine</name>
        <dbReference type="ChEBI" id="CHEBI:59789"/>
    </ligand>
</feature>
<feature type="binding site" evidence="1">
    <location>
        <position position="80"/>
    </location>
    <ligand>
        <name>S-adenosyl-L-methionine</name>
        <dbReference type="ChEBI" id="CHEBI:59789"/>
    </ligand>
</feature>
<feature type="binding site" evidence="1">
    <location>
        <begin position="100"/>
        <end position="101"/>
    </location>
    <ligand>
        <name>S-adenosyl-L-methionine</name>
        <dbReference type="ChEBI" id="CHEBI:59789"/>
    </ligand>
</feature>
<feature type="binding site" evidence="1">
    <location>
        <position position="117"/>
    </location>
    <ligand>
        <name>S-adenosyl-L-methionine</name>
        <dbReference type="ChEBI" id="CHEBI:59789"/>
    </ligand>
</feature>
<organism>
    <name type="scientific">Corynebacterium glutamicum (strain R)</name>
    <dbReference type="NCBI Taxonomy" id="340322"/>
    <lineage>
        <taxon>Bacteria</taxon>
        <taxon>Bacillati</taxon>
        <taxon>Actinomycetota</taxon>
        <taxon>Actinomycetes</taxon>
        <taxon>Mycobacteriales</taxon>
        <taxon>Corynebacteriaceae</taxon>
        <taxon>Corynebacterium</taxon>
    </lineage>
</organism>
<keyword id="KW-0474">Menaquinone biosynthesis</keyword>
<keyword id="KW-0489">Methyltransferase</keyword>
<keyword id="KW-0949">S-adenosyl-L-methionine</keyword>
<keyword id="KW-0808">Transferase</keyword>
<name>MENG_CORGB</name>
<dbReference type="EC" id="2.1.1.163" evidence="1"/>
<dbReference type="EMBL" id="AP009044">
    <property type="protein sequence ID" value="BAF53542.1"/>
    <property type="molecule type" value="Genomic_DNA"/>
</dbReference>
<dbReference type="RefSeq" id="WP_003854177.1">
    <property type="nucleotide sequence ID" value="NC_009342.1"/>
</dbReference>
<dbReference type="SMR" id="A4QBE5"/>
<dbReference type="KEGG" id="cgt:cgR_0574"/>
<dbReference type="HOGENOM" id="CLU_037990_0_0_11"/>
<dbReference type="PhylomeDB" id="A4QBE5"/>
<dbReference type="UniPathway" id="UPA00079">
    <property type="reaction ID" value="UER00169"/>
</dbReference>
<dbReference type="Proteomes" id="UP000006698">
    <property type="component" value="Chromosome"/>
</dbReference>
<dbReference type="GO" id="GO:0043770">
    <property type="term" value="F:demethylmenaquinone methyltransferase activity"/>
    <property type="evidence" value="ECO:0007669"/>
    <property type="project" value="UniProtKB-UniRule"/>
</dbReference>
<dbReference type="GO" id="GO:0009234">
    <property type="term" value="P:menaquinone biosynthetic process"/>
    <property type="evidence" value="ECO:0007669"/>
    <property type="project" value="UniProtKB-UniRule"/>
</dbReference>
<dbReference type="GO" id="GO:0032259">
    <property type="term" value="P:methylation"/>
    <property type="evidence" value="ECO:0007669"/>
    <property type="project" value="UniProtKB-KW"/>
</dbReference>
<dbReference type="CDD" id="cd02440">
    <property type="entry name" value="AdoMet_MTases"/>
    <property type="match status" value="1"/>
</dbReference>
<dbReference type="Gene3D" id="3.40.50.150">
    <property type="entry name" value="Vaccinia Virus protein VP39"/>
    <property type="match status" value="1"/>
</dbReference>
<dbReference type="HAMAP" id="MF_01813">
    <property type="entry name" value="MenG_UbiE_methyltr"/>
    <property type="match status" value="1"/>
</dbReference>
<dbReference type="InterPro" id="IPR029063">
    <property type="entry name" value="SAM-dependent_MTases_sf"/>
</dbReference>
<dbReference type="InterPro" id="IPR004033">
    <property type="entry name" value="UbiE/COQ5_MeTrFase"/>
</dbReference>
<dbReference type="InterPro" id="IPR023576">
    <property type="entry name" value="UbiE/COQ5_MeTrFase_CS"/>
</dbReference>
<dbReference type="NCBIfam" id="TIGR01934">
    <property type="entry name" value="MenG_MenH_UbiE"/>
    <property type="match status" value="1"/>
</dbReference>
<dbReference type="NCBIfam" id="NF001241">
    <property type="entry name" value="PRK00216.1-2"/>
    <property type="match status" value="1"/>
</dbReference>
<dbReference type="PANTHER" id="PTHR43591:SF24">
    <property type="entry name" value="2-METHOXY-6-POLYPRENYL-1,4-BENZOQUINOL METHYLASE, MITOCHONDRIAL"/>
    <property type="match status" value="1"/>
</dbReference>
<dbReference type="PANTHER" id="PTHR43591">
    <property type="entry name" value="METHYLTRANSFERASE"/>
    <property type="match status" value="1"/>
</dbReference>
<dbReference type="Pfam" id="PF01209">
    <property type="entry name" value="Ubie_methyltran"/>
    <property type="match status" value="1"/>
</dbReference>
<dbReference type="SUPFAM" id="SSF53335">
    <property type="entry name" value="S-adenosyl-L-methionine-dependent methyltransferases"/>
    <property type="match status" value="1"/>
</dbReference>
<dbReference type="PROSITE" id="PS51608">
    <property type="entry name" value="SAM_MT_UBIE"/>
    <property type="match status" value="1"/>
</dbReference>
<dbReference type="PROSITE" id="PS01183">
    <property type="entry name" value="UBIE_1"/>
    <property type="match status" value="1"/>
</dbReference>
<dbReference type="PROSITE" id="PS01184">
    <property type="entry name" value="UBIE_2"/>
    <property type="match status" value="1"/>
</dbReference>
<reference key="1">
    <citation type="journal article" date="2007" name="Microbiology">
        <title>Comparative analysis of the Corynebacterium glutamicum group and complete genome sequence of strain R.</title>
        <authorList>
            <person name="Yukawa H."/>
            <person name="Omumasaba C.A."/>
            <person name="Nonaka H."/>
            <person name="Kos P."/>
            <person name="Okai N."/>
            <person name="Suzuki N."/>
            <person name="Suda M."/>
            <person name="Tsuge Y."/>
            <person name="Watanabe J."/>
            <person name="Ikeda Y."/>
            <person name="Vertes A.A."/>
            <person name="Inui M."/>
        </authorList>
    </citation>
    <scope>NUCLEOTIDE SEQUENCE [LARGE SCALE GENOMIC DNA]</scope>
    <source>
        <strain>R</strain>
    </source>
</reference>
<gene>
    <name evidence="1" type="primary">menG</name>
    <name type="ordered locus">cgR_0574</name>
</gene>
<comment type="function">
    <text evidence="1">Methyltransferase required for the conversion of demethylmenaquinol (DMKH2) to menaquinol (MKH2).</text>
</comment>
<comment type="catalytic activity">
    <reaction evidence="1">
        <text>a 2-demethylmenaquinol + S-adenosyl-L-methionine = a menaquinol + S-adenosyl-L-homocysteine + H(+)</text>
        <dbReference type="Rhea" id="RHEA:42640"/>
        <dbReference type="Rhea" id="RHEA-COMP:9539"/>
        <dbReference type="Rhea" id="RHEA-COMP:9563"/>
        <dbReference type="ChEBI" id="CHEBI:15378"/>
        <dbReference type="ChEBI" id="CHEBI:18151"/>
        <dbReference type="ChEBI" id="CHEBI:55437"/>
        <dbReference type="ChEBI" id="CHEBI:57856"/>
        <dbReference type="ChEBI" id="CHEBI:59789"/>
        <dbReference type="EC" id="2.1.1.163"/>
    </reaction>
</comment>
<comment type="pathway">
    <text evidence="1">Quinol/quinone metabolism; menaquinone biosynthesis; menaquinol from 1,4-dihydroxy-2-naphthoate: step 2/2.</text>
</comment>
<comment type="similarity">
    <text evidence="1">Belongs to the class I-like SAM-binding methyltransferase superfamily. MenG/UbiE family.</text>
</comment>
<protein>
    <recommendedName>
        <fullName evidence="1">Demethylmenaquinone methyltransferase</fullName>
        <ecNumber evidence="1">2.1.1.163</ecNumber>
    </recommendedName>
</protein>
<accession>A4QBE5</accession>
<evidence type="ECO:0000255" key="1">
    <source>
        <dbReference type="HAMAP-Rule" id="MF_01813"/>
    </source>
</evidence>
<proteinExistence type="inferred from homology"/>
<sequence length="230" mass="25273">MAKADLDKDPFDVASMFDDVGKNYDLTNTVLSFGQDRVWRKRTRQRLDLKPGEKVLDLAAGTAVSTVELAKSGAFCVACDFSQGMLAAGKDRDVSKVVGDGMQLPFADNSFDAVTISYGLRNIHDFRAGLKEMARVTKPGGRLTVAEFSTPVIPVFGTVYKEYLMRLLPQVARAVSSNPEAYIYLADSIRAWPSQAELAREINQNGWSDCGWQNLTFGIVALHSAIKPEN</sequence>